<sequence length="236" mass="25627">MAKYKRVLLKLSGESLMGEKQYGIDEKRLAEYAAQIKEIHEQGVQIGIVIGGGNIFRGLSGANKGFDRVKGDQMGMLATVINSLALSSALVAAGVKARVLTAVRMEPIGEFYSKWKAIECMENGEIVIMSAGTGNPFFTTDTGSSLRGIEIEADVMLKGTRVDGIYTADPEKDPTATKFHDITYDEVLKRGLKVMDLTATCMCKENNLPIVVFDMDTVGNLKKVITGEEIGTLVHN</sequence>
<name>PYRH_BACFR</name>
<evidence type="ECO:0000255" key="1">
    <source>
        <dbReference type="HAMAP-Rule" id="MF_01220"/>
    </source>
</evidence>
<accession>Q64YI2</accession>
<dbReference type="EC" id="2.7.4.22" evidence="1"/>
<dbReference type="EMBL" id="AP006841">
    <property type="protein sequence ID" value="BAD47444.1"/>
    <property type="molecule type" value="Genomic_DNA"/>
</dbReference>
<dbReference type="RefSeq" id="WP_005784714.1">
    <property type="nucleotide sequence ID" value="NZ_UYXF01000001.1"/>
</dbReference>
<dbReference type="RefSeq" id="YP_097978.1">
    <property type="nucleotide sequence ID" value="NC_006347.1"/>
</dbReference>
<dbReference type="SMR" id="Q64YI2"/>
<dbReference type="STRING" id="295405.BF0697"/>
<dbReference type="GeneID" id="60368840"/>
<dbReference type="KEGG" id="bfr:BF0697"/>
<dbReference type="PATRIC" id="fig|295405.11.peg.704"/>
<dbReference type="HOGENOM" id="CLU_033861_0_0_10"/>
<dbReference type="OrthoDB" id="9807458at2"/>
<dbReference type="UniPathway" id="UPA00159">
    <property type="reaction ID" value="UER00275"/>
</dbReference>
<dbReference type="Proteomes" id="UP000002197">
    <property type="component" value="Chromosome"/>
</dbReference>
<dbReference type="GO" id="GO:0005737">
    <property type="term" value="C:cytoplasm"/>
    <property type="evidence" value="ECO:0007669"/>
    <property type="project" value="UniProtKB-SubCell"/>
</dbReference>
<dbReference type="GO" id="GO:0005524">
    <property type="term" value="F:ATP binding"/>
    <property type="evidence" value="ECO:0007669"/>
    <property type="project" value="UniProtKB-KW"/>
</dbReference>
<dbReference type="GO" id="GO:0033862">
    <property type="term" value="F:UMP kinase activity"/>
    <property type="evidence" value="ECO:0007669"/>
    <property type="project" value="UniProtKB-EC"/>
</dbReference>
<dbReference type="GO" id="GO:0044210">
    <property type="term" value="P:'de novo' CTP biosynthetic process"/>
    <property type="evidence" value="ECO:0007669"/>
    <property type="project" value="UniProtKB-UniRule"/>
</dbReference>
<dbReference type="GO" id="GO:0006225">
    <property type="term" value="P:UDP biosynthetic process"/>
    <property type="evidence" value="ECO:0007669"/>
    <property type="project" value="TreeGrafter"/>
</dbReference>
<dbReference type="CDD" id="cd04254">
    <property type="entry name" value="AAK_UMPK-PyrH-Ec"/>
    <property type="match status" value="1"/>
</dbReference>
<dbReference type="FunFam" id="3.40.1160.10:FF:000001">
    <property type="entry name" value="Uridylate kinase"/>
    <property type="match status" value="1"/>
</dbReference>
<dbReference type="Gene3D" id="3.40.1160.10">
    <property type="entry name" value="Acetylglutamate kinase-like"/>
    <property type="match status" value="1"/>
</dbReference>
<dbReference type="HAMAP" id="MF_01220_B">
    <property type="entry name" value="PyrH_B"/>
    <property type="match status" value="1"/>
</dbReference>
<dbReference type="InterPro" id="IPR036393">
    <property type="entry name" value="AceGlu_kinase-like_sf"/>
</dbReference>
<dbReference type="InterPro" id="IPR001048">
    <property type="entry name" value="Asp/Glu/Uridylate_kinase"/>
</dbReference>
<dbReference type="InterPro" id="IPR011817">
    <property type="entry name" value="Uridylate_kinase"/>
</dbReference>
<dbReference type="InterPro" id="IPR015963">
    <property type="entry name" value="Uridylate_kinase_bac"/>
</dbReference>
<dbReference type="NCBIfam" id="TIGR02075">
    <property type="entry name" value="pyrH_bact"/>
    <property type="match status" value="1"/>
</dbReference>
<dbReference type="PANTHER" id="PTHR42833">
    <property type="entry name" value="URIDYLATE KINASE"/>
    <property type="match status" value="1"/>
</dbReference>
<dbReference type="PANTHER" id="PTHR42833:SF4">
    <property type="entry name" value="URIDYLATE KINASE PUMPKIN, CHLOROPLASTIC"/>
    <property type="match status" value="1"/>
</dbReference>
<dbReference type="Pfam" id="PF00696">
    <property type="entry name" value="AA_kinase"/>
    <property type="match status" value="1"/>
</dbReference>
<dbReference type="PIRSF" id="PIRSF005650">
    <property type="entry name" value="Uridylate_kin"/>
    <property type="match status" value="1"/>
</dbReference>
<dbReference type="SUPFAM" id="SSF53633">
    <property type="entry name" value="Carbamate kinase-like"/>
    <property type="match status" value="1"/>
</dbReference>
<reference key="1">
    <citation type="journal article" date="2004" name="Proc. Natl. Acad. Sci. U.S.A.">
        <title>Genomic analysis of Bacteroides fragilis reveals extensive DNA inversions regulating cell surface adaptation.</title>
        <authorList>
            <person name="Kuwahara T."/>
            <person name="Yamashita A."/>
            <person name="Hirakawa H."/>
            <person name="Nakayama H."/>
            <person name="Toh H."/>
            <person name="Okada N."/>
            <person name="Kuhara S."/>
            <person name="Hattori M."/>
            <person name="Hayashi T."/>
            <person name="Ohnishi Y."/>
        </authorList>
    </citation>
    <scope>NUCLEOTIDE SEQUENCE [LARGE SCALE GENOMIC DNA]</scope>
    <source>
        <strain>YCH46</strain>
    </source>
</reference>
<proteinExistence type="inferred from homology"/>
<organism>
    <name type="scientific">Bacteroides fragilis (strain YCH46)</name>
    <dbReference type="NCBI Taxonomy" id="295405"/>
    <lineage>
        <taxon>Bacteria</taxon>
        <taxon>Pseudomonadati</taxon>
        <taxon>Bacteroidota</taxon>
        <taxon>Bacteroidia</taxon>
        <taxon>Bacteroidales</taxon>
        <taxon>Bacteroidaceae</taxon>
        <taxon>Bacteroides</taxon>
    </lineage>
</organism>
<feature type="chain" id="PRO_1000053890" description="Uridylate kinase">
    <location>
        <begin position="1"/>
        <end position="236"/>
    </location>
</feature>
<feature type="binding site" evidence="1">
    <location>
        <begin position="10"/>
        <end position="13"/>
    </location>
    <ligand>
        <name>ATP</name>
        <dbReference type="ChEBI" id="CHEBI:30616"/>
    </ligand>
</feature>
<feature type="binding site" evidence="1">
    <location>
        <position position="52"/>
    </location>
    <ligand>
        <name>UMP</name>
        <dbReference type="ChEBI" id="CHEBI:57865"/>
    </ligand>
</feature>
<feature type="binding site" evidence="1">
    <location>
        <position position="53"/>
    </location>
    <ligand>
        <name>ATP</name>
        <dbReference type="ChEBI" id="CHEBI:30616"/>
    </ligand>
</feature>
<feature type="binding site" evidence="1">
    <location>
        <position position="57"/>
    </location>
    <ligand>
        <name>ATP</name>
        <dbReference type="ChEBI" id="CHEBI:30616"/>
    </ligand>
</feature>
<feature type="binding site" evidence="1">
    <location>
        <position position="72"/>
    </location>
    <ligand>
        <name>UMP</name>
        <dbReference type="ChEBI" id="CHEBI:57865"/>
    </ligand>
</feature>
<feature type="binding site" evidence="1">
    <location>
        <begin position="133"/>
        <end position="140"/>
    </location>
    <ligand>
        <name>UMP</name>
        <dbReference type="ChEBI" id="CHEBI:57865"/>
    </ligand>
</feature>
<feature type="binding site" evidence="1">
    <location>
        <position position="160"/>
    </location>
    <ligand>
        <name>ATP</name>
        <dbReference type="ChEBI" id="CHEBI:30616"/>
    </ligand>
</feature>
<feature type="binding site" evidence="1">
    <location>
        <position position="166"/>
    </location>
    <ligand>
        <name>ATP</name>
        <dbReference type="ChEBI" id="CHEBI:30616"/>
    </ligand>
</feature>
<feature type="binding site" evidence="1">
    <location>
        <position position="169"/>
    </location>
    <ligand>
        <name>ATP</name>
        <dbReference type="ChEBI" id="CHEBI:30616"/>
    </ligand>
</feature>
<gene>
    <name evidence="1" type="primary">pyrH</name>
    <name type="ordered locus">BF0697</name>
</gene>
<keyword id="KW-0067">ATP-binding</keyword>
<keyword id="KW-0963">Cytoplasm</keyword>
<keyword id="KW-0418">Kinase</keyword>
<keyword id="KW-0547">Nucleotide-binding</keyword>
<keyword id="KW-0665">Pyrimidine biosynthesis</keyword>
<keyword id="KW-0808">Transferase</keyword>
<protein>
    <recommendedName>
        <fullName evidence="1">Uridylate kinase</fullName>
        <shortName evidence="1">UK</shortName>
        <ecNumber evidence="1">2.7.4.22</ecNumber>
    </recommendedName>
    <alternativeName>
        <fullName evidence="1">Uridine monophosphate kinase</fullName>
        <shortName evidence="1">UMP kinase</shortName>
        <shortName evidence="1">UMPK</shortName>
    </alternativeName>
</protein>
<comment type="function">
    <text evidence="1">Catalyzes the reversible phosphorylation of UMP to UDP.</text>
</comment>
<comment type="catalytic activity">
    <reaction evidence="1">
        <text>UMP + ATP = UDP + ADP</text>
        <dbReference type="Rhea" id="RHEA:24400"/>
        <dbReference type="ChEBI" id="CHEBI:30616"/>
        <dbReference type="ChEBI" id="CHEBI:57865"/>
        <dbReference type="ChEBI" id="CHEBI:58223"/>
        <dbReference type="ChEBI" id="CHEBI:456216"/>
        <dbReference type="EC" id="2.7.4.22"/>
    </reaction>
</comment>
<comment type="activity regulation">
    <text evidence="1">Inhibited by UTP.</text>
</comment>
<comment type="pathway">
    <text evidence="1">Pyrimidine metabolism; CTP biosynthesis via de novo pathway; UDP from UMP (UMPK route): step 1/1.</text>
</comment>
<comment type="subunit">
    <text evidence="1">Homohexamer.</text>
</comment>
<comment type="subcellular location">
    <subcellularLocation>
        <location evidence="1">Cytoplasm</location>
    </subcellularLocation>
</comment>
<comment type="similarity">
    <text evidence="1">Belongs to the UMP kinase family.</text>
</comment>